<gene>
    <name evidence="2" type="primary">PA</name>
</gene>
<proteinExistence type="inferred from homology"/>
<sequence length="716" mass="82584">MEDFVRQCFNPMIVELAEKAMKEYGEDPKIETNKFAAICTHLEVCFMYSDFHFIDERGESIIVESGDPNALLKHRFEIIEGRDRTMAWTVVNSICNTTGVEKPKFLPDLYDYRENRFIEIGVTRREVHIYYLEKANKIKSEKTHIHIFSFTGEEMATKADYTLDEESRARIKTRLFTIRQEMASRGLWDSFRQSERGEETIEERFEITGTMRRLADQSLPPNFSSLENFRAYVDGFEPNGCIEGKLSQMSKEVNARIEPFLKTTPRPLRLPDGPPCSQRSKFLLMDALKLSIEDPSHEGEGIPLYDAIKCMKTFFGWKEPNIVKPHEKGINLNYLLAWKQVLAELQDIENEEKIPKTKNMKKTSQLKWALGENMAPEKVDFEDCKDVGDLKQYDSDEPEPRSLASWIQSEFNKACELTDSSWIELDEIGEDVAPIEHIASMRRNYFTAEVSHCRATEYIMKGVYINTALLNASCAAMDDFQLIPMISKCRTKEGRRKTNLYGFIIKGRSHLRNDTDVVNYVSMEFSLTDPRLEPHKWEKYCVLEIGDMLLRTAIGQVSRPMFLYMRTNGTSKIKMKWGMEMRRCLLQSLQQIESMIEAESSVKEKDMTKEFFENKSETWPIGESPKGVEEGSIGKVCRTLLAKSVFNSLYASPQLEGFSAESRKLLLIVQALRDNLEPGTFDLGGLYEAIEECLINDPWVLLNASWFNSFLTHALK</sequence>
<feature type="chain" id="PRO_0000309852" description="Polymerase acidic protein">
    <location>
        <begin position="1"/>
        <end position="716"/>
    </location>
</feature>
<feature type="short sequence motif" description="Nuclear localization signal 1 (NLS1)" evidence="1 2">
    <location>
        <begin position="124"/>
        <end position="139"/>
    </location>
</feature>
<feature type="short sequence motif" description="Nuclear localization signal 2 (NLS2)" evidence="1 2">
    <location>
        <begin position="184"/>
        <end position="247"/>
    </location>
</feature>
<feature type="binding site" evidence="2">
    <location>
        <position position="41"/>
    </location>
    <ligand>
        <name>Mn(2+)</name>
        <dbReference type="ChEBI" id="CHEBI:29035"/>
        <label>1</label>
    </ligand>
</feature>
<feature type="binding site" evidence="2">
    <location>
        <position position="80"/>
    </location>
    <ligand>
        <name>Mn(2+)</name>
        <dbReference type="ChEBI" id="CHEBI:29035"/>
        <label>2</label>
    </ligand>
</feature>
<feature type="binding site" evidence="2">
    <location>
        <position position="108"/>
    </location>
    <ligand>
        <name>Mn(2+)</name>
        <dbReference type="ChEBI" id="CHEBI:29035"/>
        <label>1</label>
    </ligand>
</feature>
<feature type="binding site" evidence="2">
    <location>
        <position position="108"/>
    </location>
    <ligand>
        <name>Mn(2+)</name>
        <dbReference type="ChEBI" id="CHEBI:29035"/>
        <label>2</label>
    </ligand>
</feature>
<feature type="binding site" evidence="2">
    <location>
        <position position="119"/>
    </location>
    <ligand>
        <name>Mn(2+)</name>
        <dbReference type="ChEBI" id="CHEBI:29035"/>
        <label>1</label>
    </ligand>
</feature>
<feature type="binding site" evidence="2">
    <location>
        <position position="120"/>
    </location>
    <ligand>
        <name>Mn(2+)</name>
        <dbReference type="ChEBI" id="CHEBI:29035"/>
        <label>1</label>
    </ligand>
</feature>
<name>PA_I59A0</name>
<reference key="1">
    <citation type="journal article" date="2006" name="Science">
        <title>Large-scale sequence analysis of avian influenza isolates.</title>
        <authorList>
            <person name="Obenauer J.C."/>
            <person name="Denson J."/>
            <person name="Mehta P.K."/>
            <person name="Su X."/>
            <person name="Mukatira S."/>
            <person name="Finkelstein D.B."/>
            <person name="Xu X."/>
            <person name="Wang J."/>
            <person name="Ma J."/>
            <person name="Fan Y."/>
            <person name="Rakestraw K.M."/>
            <person name="Webster R.G."/>
            <person name="Hoffmann E."/>
            <person name="Krauss S."/>
            <person name="Zheng J."/>
            <person name="Zhang Z."/>
            <person name="Naeve C.W."/>
        </authorList>
    </citation>
    <scope>NUCLEOTIDE SEQUENCE [GENOMIC RNA]</scope>
</reference>
<accession>Q0A2G9</accession>
<evidence type="ECO:0000250" key="1">
    <source>
        <dbReference type="UniProtKB" id="P03433"/>
    </source>
</evidence>
<evidence type="ECO:0000255" key="2">
    <source>
        <dbReference type="HAMAP-Rule" id="MF_04063"/>
    </source>
</evidence>
<organism>
    <name type="scientific">Influenza A virus (strain A/Chicken/Scotland/1959 H5N1)</name>
    <dbReference type="NCBI Taxonomy" id="402527"/>
    <lineage>
        <taxon>Viruses</taxon>
        <taxon>Riboviria</taxon>
        <taxon>Orthornavirae</taxon>
        <taxon>Negarnaviricota</taxon>
        <taxon>Polyploviricotina</taxon>
        <taxon>Insthoviricetes</taxon>
        <taxon>Articulavirales</taxon>
        <taxon>Orthomyxoviridae</taxon>
        <taxon>Alphainfluenzavirus</taxon>
        <taxon>Alphainfluenzavirus influenzae</taxon>
        <taxon>Influenza A virus</taxon>
    </lineage>
</organism>
<protein>
    <recommendedName>
        <fullName evidence="2">Polymerase acidic protein</fullName>
        <ecNumber evidence="2">3.1.-.-</ecNumber>
    </recommendedName>
    <alternativeName>
        <fullName evidence="2">RNA-directed RNA polymerase subunit P2</fullName>
    </alternativeName>
</protein>
<comment type="function">
    <text evidence="2">Plays an essential role in viral RNA transcription and replication by forming the heterotrimeric polymerase complex together with PB1 and PB2 subunits. The complex transcribes viral mRNAs by using a unique mechanism called cap-snatching. It consists in the hijacking and cleavage of host capped pre-mRNAs. These short capped RNAs are then used as primers for viral mRNAs. The PB2 subunit is responsible for the binding of the 5' cap of cellular pre-mRNAs which are subsequently cleaved after 10-13 nucleotides by the PA subunit that carries the endonuclease activity.</text>
</comment>
<comment type="cofactor">
    <cofactor evidence="2">
        <name>Mn(2+)</name>
        <dbReference type="ChEBI" id="CHEBI:29035"/>
    </cofactor>
    <text evidence="2">Binds 2 manganese ions per subunit.</text>
</comment>
<comment type="subunit">
    <text evidence="1 2">Influenza RNA polymerase is composed of three subunits: PB1, PB2 and PA. Interacts (via C-terminus) with PB1 (via N-terminus).</text>
</comment>
<comment type="subcellular location">
    <subcellularLocation>
        <location evidence="2">Host cytoplasm</location>
    </subcellularLocation>
    <subcellularLocation>
        <location evidence="2">Host nucleus</location>
    </subcellularLocation>
    <text evidence="1 2">PB1 and PA are transported in the host nucleus as a complex.</text>
</comment>
<comment type="alternative products">
    <event type="ribosomal frameshifting"/>
    <isoform>
        <id>Q0A2G9-1</id>
        <name>PA</name>
        <sequence type="displayed"/>
    </isoform>
    <isoform>
        <id>P0CK76-1</id>
        <name>PA-X</name>
        <sequence type="external"/>
    </isoform>
</comment>
<comment type="PTM">
    <text evidence="1 2">Phosphorylated on serines and threonines by host kinases, including human casein kinase II.</text>
</comment>
<comment type="similarity">
    <text evidence="2">Belongs to the influenza viruses PA family.</text>
</comment>
<keyword id="KW-1157">Cap snatching</keyword>
<keyword id="KW-0255">Endonuclease</keyword>
<keyword id="KW-1262">Eukaryotic host gene expression shutoff by virus</keyword>
<keyword id="KW-1191">Eukaryotic host transcription shutoff by virus</keyword>
<keyword id="KW-1035">Host cytoplasm</keyword>
<keyword id="KW-1190">Host gene expression shutoff by virus</keyword>
<keyword id="KW-1048">Host nucleus</keyword>
<keyword id="KW-0945">Host-virus interaction</keyword>
<keyword id="KW-0378">Hydrolase</keyword>
<keyword id="KW-1104">Inhibition of host RNA polymerase II by virus</keyword>
<keyword id="KW-0464">Manganese</keyword>
<keyword id="KW-0479">Metal-binding</keyword>
<keyword id="KW-0540">Nuclease</keyword>
<keyword id="KW-0597">Phosphoprotein</keyword>
<keyword id="KW-0688">Ribosomal frameshifting</keyword>
<dbReference type="EC" id="3.1.-.-" evidence="2"/>
<dbReference type="EMBL" id="CY015086">
    <property type="protein sequence ID" value="ABI85113.1"/>
    <property type="molecule type" value="Genomic_RNA"/>
</dbReference>
<dbReference type="SMR" id="Q0A2G9"/>
<dbReference type="Proteomes" id="UP000169634">
    <property type="component" value="Genome"/>
</dbReference>
<dbReference type="GO" id="GO:0030430">
    <property type="term" value="C:host cell cytoplasm"/>
    <property type="evidence" value="ECO:0007669"/>
    <property type="project" value="UniProtKB-SubCell"/>
</dbReference>
<dbReference type="GO" id="GO:0042025">
    <property type="term" value="C:host cell nucleus"/>
    <property type="evidence" value="ECO:0007669"/>
    <property type="project" value="UniProtKB-SubCell"/>
</dbReference>
<dbReference type="GO" id="GO:0004519">
    <property type="term" value="F:endonuclease activity"/>
    <property type="evidence" value="ECO:0007669"/>
    <property type="project" value="UniProtKB-KW"/>
</dbReference>
<dbReference type="GO" id="GO:0046872">
    <property type="term" value="F:metal ion binding"/>
    <property type="evidence" value="ECO:0007669"/>
    <property type="project" value="UniProtKB-KW"/>
</dbReference>
<dbReference type="GO" id="GO:0003723">
    <property type="term" value="F:RNA binding"/>
    <property type="evidence" value="ECO:0007669"/>
    <property type="project" value="UniProtKB-UniRule"/>
</dbReference>
<dbReference type="GO" id="GO:0075526">
    <property type="term" value="P:cap snatching"/>
    <property type="evidence" value="ECO:0007669"/>
    <property type="project" value="UniProtKB-UniRule"/>
</dbReference>
<dbReference type="GO" id="GO:0006351">
    <property type="term" value="P:DNA-templated transcription"/>
    <property type="evidence" value="ECO:0007669"/>
    <property type="project" value="UniProtKB-UniRule"/>
</dbReference>
<dbReference type="GO" id="GO:0039657">
    <property type="term" value="P:symbiont-mediated suppression of host gene expression"/>
    <property type="evidence" value="ECO:0007669"/>
    <property type="project" value="UniProtKB-KW"/>
</dbReference>
<dbReference type="GO" id="GO:0039523">
    <property type="term" value="P:symbiont-mediated suppression of host mRNA transcription via inhibition of RNA polymerase II activity"/>
    <property type="evidence" value="ECO:0007669"/>
    <property type="project" value="UniProtKB-UniRule"/>
</dbReference>
<dbReference type="GO" id="GO:0039694">
    <property type="term" value="P:viral RNA genome replication"/>
    <property type="evidence" value="ECO:0007669"/>
    <property type="project" value="InterPro"/>
</dbReference>
<dbReference type="GO" id="GO:0075523">
    <property type="term" value="P:viral translational frameshifting"/>
    <property type="evidence" value="ECO:0007669"/>
    <property type="project" value="UniProtKB-KW"/>
</dbReference>
<dbReference type="FunFam" id="3.40.91.90:FF:000001">
    <property type="entry name" value="Polymerase acidic protein"/>
    <property type="match status" value="1"/>
</dbReference>
<dbReference type="Gene3D" id="3.40.91.90">
    <property type="entry name" value="Influenza RNA-dependent RNA polymerase subunit PA, endonuclease domain"/>
    <property type="match status" value="1"/>
</dbReference>
<dbReference type="HAMAP" id="MF_04063">
    <property type="entry name" value="INFV_PA"/>
    <property type="match status" value="1"/>
</dbReference>
<dbReference type="InterPro" id="IPR037534">
    <property type="entry name" value="INFV_PA"/>
</dbReference>
<dbReference type="InterPro" id="IPR001009">
    <property type="entry name" value="PA/PA-X"/>
</dbReference>
<dbReference type="InterPro" id="IPR038372">
    <property type="entry name" value="PA/PA-X_sf"/>
</dbReference>
<dbReference type="Pfam" id="PF00603">
    <property type="entry name" value="Flu_PA"/>
    <property type="match status" value="1"/>
</dbReference>
<organismHost>
    <name type="scientific">Aves</name>
    <dbReference type="NCBI Taxonomy" id="8782"/>
</organismHost>
<organismHost>
    <name type="scientific">Felis catus</name>
    <name type="common">Cat</name>
    <name type="synonym">Felis silvestris catus</name>
    <dbReference type="NCBI Taxonomy" id="9685"/>
</organismHost>
<organismHost>
    <name type="scientific">Homo sapiens</name>
    <name type="common">Human</name>
    <dbReference type="NCBI Taxonomy" id="9606"/>
</organismHost>
<organismHost>
    <name type="scientific">Panthera pardus</name>
    <name type="common">Leopard</name>
    <name type="synonym">Felis pardus</name>
    <dbReference type="NCBI Taxonomy" id="9691"/>
</organismHost>
<organismHost>
    <name type="scientific">Panthera tigris</name>
    <name type="common">Tiger</name>
    <dbReference type="NCBI Taxonomy" id="9694"/>
</organismHost>
<organismHost>
    <name type="scientific">Sus scrofa</name>
    <name type="common">Pig</name>
    <dbReference type="NCBI Taxonomy" id="9823"/>
</organismHost>